<accession>Q4WB00</accession>
<protein>
    <recommendedName>
        <fullName evidence="4">Methyltransferase psoC</fullName>
        <ecNumber evidence="3">2.1.1.-</ecNumber>
    </recommendedName>
    <alternativeName>
        <fullName evidence="4">Pseurotin biosynthesis protein C</fullName>
    </alternativeName>
</protein>
<evidence type="ECO:0000269" key="1">
    <source>
    </source>
</evidence>
<evidence type="ECO:0000269" key="2">
    <source>
    </source>
</evidence>
<evidence type="ECO:0000269" key="3">
    <source>
    </source>
</evidence>
<evidence type="ECO:0000303" key="4">
    <source>
    </source>
</evidence>
<evidence type="ECO:0000305" key="5"/>
<proteinExistence type="evidence at protein level"/>
<comment type="function">
    <text evidence="2 3">Methyltransferase; part of the gene cluster that mediates the biosynthesis of pseurotin A, a competitive inhibitor of chitin synthase and an inducer of nerve-cell proliferation (PubMed:24082142, PubMed:24939566). The PKS-NRPS hybrid synthetase psoA is responsible for the biosynthesis of azaspirene, one of the first intermediates having the 1-oxa-7-azaspiro[4,4]-non-2-ene-4,6-dione core of pseurotin, via condensation of one acetyl-CoA, 4 malonyl-CoA, and a L-phenylalanine molecule (PubMed:24082142, PubMed:24939566). The dual-functional monooxygenase/methyltransferase psoF seems to be involved in the addition of the C3 methyl group onto the pseurotin scaffold (PubMed:24939566). Azaspirene is then converted to synerazol through 4 steps including oxidation of C17 by the cytochrome P450 monooxygenase psoD, O-methylation of the hydroxy group of C8 by the methyltransferase psoC, and the trans-to-cis isomerization of the C13 olefin by the glutathione S-transferase psoE (PubMed:24939566). The fourth step of synerazol production is performed by the dual-functional monooxygenase/methyltransferase psoF which seems to catalyze the epoxidation of the intermediate deepoxy-synerazol (PubMed:24939566). Synerazol can be attacked by a water molecule nonenzymatically at two different positions to yield two diol products, pseurotin A and pseurotin D (PubMed:24939566).</text>
</comment>
<comment type="pathway">
    <text evidence="2 3">Secondary metabolite biosynthesis.</text>
</comment>
<comment type="induction">
    <text evidence="1">Expression is induced under hypoxic conditions (PubMed:21388144).</text>
</comment>
<comment type="disruption phenotype">
    <text evidence="2 3">Abolishes the production of pseurotin (PubMed:24082142, PubMed:24939566).</text>
</comment>
<comment type="similarity">
    <text evidence="5">Belongs to the methyltransferase superfamily. LaeA methyltransferase family.</text>
</comment>
<feature type="chain" id="PRO_0000438197" description="Methyltransferase psoC">
    <location>
        <begin position="1"/>
        <end position="271"/>
    </location>
</feature>
<organism>
    <name type="scientific">Aspergillus fumigatus (strain ATCC MYA-4609 / CBS 101355 / FGSC A1100 / Af293)</name>
    <name type="common">Neosartorya fumigata</name>
    <dbReference type="NCBI Taxonomy" id="330879"/>
    <lineage>
        <taxon>Eukaryota</taxon>
        <taxon>Fungi</taxon>
        <taxon>Dikarya</taxon>
        <taxon>Ascomycota</taxon>
        <taxon>Pezizomycotina</taxon>
        <taxon>Eurotiomycetes</taxon>
        <taxon>Eurotiomycetidae</taxon>
        <taxon>Eurotiales</taxon>
        <taxon>Aspergillaceae</taxon>
        <taxon>Aspergillus</taxon>
        <taxon>Aspergillus subgen. Fumigati</taxon>
    </lineage>
</organism>
<sequence>MDNFMEMTKKLGHQPELLRLRALDATYDDALEGKLVVAPLDMSEPGKKILDSGTADGTWLRNVRSKQSVPHDYYGSDVEGELFPKDPDGITYFAHSFKDPWPQQYLGFFDLVHIRGSLAGSAPEGPAPVIQNLTTLLKPGGWVQLMEMNAFSPPPNGPAMTDFAKMASEMFTGIGVGDFANNNKSMLEDAGLKNVQEKRVIVNLGKKAKPELHDQSIHGVTGPIVPLTSVARTVKSSFTGEQLDALPARVKEELETEGGQVEMIIAFGQKA</sequence>
<dbReference type="EC" id="2.1.1.-" evidence="3"/>
<dbReference type="EMBL" id="AAHF01000014">
    <property type="protein sequence ID" value="EAL85112.1"/>
    <property type="molecule type" value="Genomic_DNA"/>
</dbReference>
<dbReference type="RefSeq" id="XP_747150.1">
    <property type="nucleotide sequence ID" value="XM_742057.1"/>
</dbReference>
<dbReference type="SMR" id="Q4WB00"/>
<dbReference type="STRING" id="330879.Q4WB00"/>
<dbReference type="EnsemblFungi" id="EAL85112">
    <property type="protein sequence ID" value="EAL85112"/>
    <property type="gene ID" value="AFUA_8G00550"/>
</dbReference>
<dbReference type="GeneID" id="3504509"/>
<dbReference type="KEGG" id="afm:AFUA_8G00550"/>
<dbReference type="VEuPathDB" id="FungiDB:Afu8g00550"/>
<dbReference type="eggNOG" id="ENOG502SIG3">
    <property type="taxonomic scope" value="Eukaryota"/>
</dbReference>
<dbReference type="HOGENOM" id="CLU_010595_9_3_1"/>
<dbReference type="InParanoid" id="Q4WB00"/>
<dbReference type="OMA" id="PAMTDFA"/>
<dbReference type="OrthoDB" id="184880at2759"/>
<dbReference type="Proteomes" id="UP000002530">
    <property type="component" value="Chromosome 8"/>
</dbReference>
<dbReference type="GO" id="GO:0008168">
    <property type="term" value="F:methyltransferase activity"/>
    <property type="evidence" value="ECO:0007669"/>
    <property type="project" value="UniProtKB-KW"/>
</dbReference>
<dbReference type="GO" id="GO:0032259">
    <property type="term" value="P:methylation"/>
    <property type="evidence" value="ECO:0007669"/>
    <property type="project" value="UniProtKB-KW"/>
</dbReference>
<dbReference type="Gene3D" id="3.40.50.150">
    <property type="entry name" value="Vaccinia Virus protein VP39"/>
    <property type="match status" value="1"/>
</dbReference>
<dbReference type="InterPro" id="IPR029063">
    <property type="entry name" value="SAM-dependent_MTases_sf"/>
</dbReference>
<dbReference type="Pfam" id="PF13489">
    <property type="entry name" value="Methyltransf_23"/>
    <property type="match status" value="1"/>
</dbReference>
<dbReference type="SUPFAM" id="SSF53335">
    <property type="entry name" value="S-adenosyl-L-methionine-dependent methyltransferases"/>
    <property type="match status" value="1"/>
</dbReference>
<reference key="1">
    <citation type="journal article" date="2005" name="Nature">
        <title>Genomic sequence of the pathogenic and allergenic filamentous fungus Aspergillus fumigatus.</title>
        <authorList>
            <person name="Nierman W.C."/>
            <person name="Pain A."/>
            <person name="Anderson M.J."/>
            <person name="Wortman J.R."/>
            <person name="Kim H.S."/>
            <person name="Arroyo J."/>
            <person name="Berriman M."/>
            <person name="Abe K."/>
            <person name="Archer D.B."/>
            <person name="Bermejo C."/>
            <person name="Bennett J.W."/>
            <person name="Bowyer P."/>
            <person name="Chen D."/>
            <person name="Collins M."/>
            <person name="Coulsen R."/>
            <person name="Davies R."/>
            <person name="Dyer P.S."/>
            <person name="Farman M.L."/>
            <person name="Fedorova N."/>
            <person name="Fedorova N.D."/>
            <person name="Feldblyum T.V."/>
            <person name="Fischer R."/>
            <person name="Fosker N."/>
            <person name="Fraser A."/>
            <person name="Garcia J.L."/>
            <person name="Garcia M.J."/>
            <person name="Goble A."/>
            <person name="Goldman G.H."/>
            <person name="Gomi K."/>
            <person name="Griffith-Jones S."/>
            <person name="Gwilliam R."/>
            <person name="Haas B.J."/>
            <person name="Haas H."/>
            <person name="Harris D.E."/>
            <person name="Horiuchi H."/>
            <person name="Huang J."/>
            <person name="Humphray S."/>
            <person name="Jimenez J."/>
            <person name="Keller N."/>
            <person name="Khouri H."/>
            <person name="Kitamoto K."/>
            <person name="Kobayashi T."/>
            <person name="Konzack S."/>
            <person name="Kulkarni R."/>
            <person name="Kumagai T."/>
            <person name="Lafton A."/>
            <person name="Latge J.-P."/>
            <person name="Li W."/>
            <person name="Lord A."/>
            <person name="Lu C."/>
            <person name="Majoros W.H."/>
            <person name="May G.S."/>
            <person name="Miller B.L."/>
            <person name="Mohamoud Y."/>
            <person name="Molina M."/>
            <person name="Monod M."/>
            <person name="Mouyna I."/>
            <person name="Mulligan S."/>
            <person name="Murphy L.D."/>
            <person name="O'Neil S."/>
            <person name="Paulsen I."/>
            <person name="Penalva M.A."/>
            <person name="Pertea M."/>
            <person name="Price C."/>
            <person name="Pritchard B.L."/>
            <person name="Quail M.A."/>
            <person name="Rabbinowitsch E."/>
            <person name="Rawlins N."/>
            <person name="Rajandream M.A."/>
            <person name="Reichard U."/>
            <person name="Renauld H."/>
            <person name="Robson G.D."/>
            <person name="Rodriguez de Cordoba S."/>
            <person name="Rodriguez-Pena J.M."/>
            <person name="Ronning C.M."/>
            <person name="Rutter S."/>
            <person name="Salzberg S.L."/>
            <person name="Sanchez M."/>
            <person name="Sanchez-Ferrero J.C."/>
            <person name="Saunders D."/>
            <person name="Seeger K."/>
            <person name="Squares R."/>
            <person name="Squares S."/>
            <person name="Takeuchi M."/>
            <person name="Tekaia F."/>
            <person name="Turner G."/>
            <person name="Vazquez de Aldana C.R."/>
            <person name="Weidman J."/>
            <person name="White O."/>
            <person name="Woodward J.R."/>
            <person name="Yu J.-H."/>
            <person name="Fraser C.M."/>
            <person name="Galagan J.E."/>
            <person name="Asai K."/>
            <person name="Machida M."/>
            <person name="Hall N."/>
            <person name="Barrell B.G."/>
            <person name="Denning D.W."/>
        </authorList>
    </citation>
    <scope>NUCLEOTIDE SEQUENCE [LARGE SCALE GENOMIC DNA]</scope>
    <source>
        <strain>ATCC MYA-4609 / CBS 101355 / FGSC A1100 / Af293</strain>
    </source>
</reference>
<reference key="2">
    <citation type="journal article" date="2011" name="J. Proteome Res.">
        <title>Analysis of the Aspergillus fumigatus proteome reveals metabolic changes and the activation of the pseurotin A biosynthesis gene cluster in response to hypoxia.</title>
        <authorList>
            <person name="Voedisch M."/>
            <person name="Scherlach K."/>
            <person name="Winkler R."/>
            <person name="Hertweck C."/>
            <person name="Braun H.P."/>
            <person name="Roth M."/>
            <person name="Haas H."/>
            <person name="Werner E.R."/>
            <person name="Brakhage A.A."/>
            <person name="Kniemeyer O."/>
        </authorList>
    </citation>
    <scope>INDUCTION</scope>
</reference>
<reference key="3">
    <citation type="journal article" date="2013" name="Proc. Natl. Acad. Sci. U.S.A.">
        <title>Prototype of an intertwined secondary-metabolite supercluster.</title>
        <authorList>
            <person name="Wiemann P."/>
            <person name="Guo C.J."/>
            <person name="Palmer J.M."/>
            <person name="Sekonyela R."/>
            <person name="Wang C.C."/>
            <person name="Keller N.P."/>
        </authorList>
    </citation>
    <scope>FUNCTION</scope>
    <scope>DISRUPTION PHENOTYPE</scope>
</reference>
<reference key="4">
    <citation type="journal article" date="2014" name="Angew. Chem. Int. Ed.">
        <title>Elucidation of pseurotin biosynthetic pathway points to trans-acting C-methyltransferase: generation of chemical diversity.</title>
        <authorList>
            <person name="Tsunematsu Y."/>
            <person name="Fukutomi M."/>
            <person name="Saruwatari T."/>
            <person name="Noguchi H."/>
            <person name="Hotta K."/>
            <person name="Tang Y."/>
            <person name="Watanabe K."/>
        </authorList>
    </citation>
    <scope>FUNCTION</scope>
    <scope>DISRUPTION PHENOTYPE</scope>
    <scope>CATALYTIC ACTIVITY</scope>
</reference>
<gene>
    <name evidence="4" type="primary">psoC</name>
    <name type="ORF">AFUA_8G00550</name>
</gene>
<keyword id="KW-0489">Methyltransferase</keyword>
<keyword id="KW-1185">Reference proteome</keyword>
<keyword id="KW-0949">S-adenosyl-L-methionine</keyword>
<keyword id="KW-0808">Transferase</keyword>
<name>PSOC_ASPFU</name>